<sequence>MSFTEEETKLGKSLFEACSFTERPIAKDSHLETVRQVMRKNIPATITTSDLGLFTDEEEATKKKEIIQGDITIDGTTPLHVICSSFPSDATAEELEVALEMMRELFQWGAGWMLLDEQGQTPGCVAWDRSKAEARDSVLASVYNEIVSAGTRSEVFLRRINKSENVEFLSDDDDEEMDVDDDEEDESRDGEETGDIQQAIADAIKQAKEAGLEVVVDGETVEEVPELVGDKEDEKNNESAAQNEVDLAGSQMDYLKDKLTYTDDNKTLITTQNDGVMMDWEDEIMQKSADLLVSRADKESDGPVVLNVGFGLGIIDTYLQSKKPSKHYICEAHPDVLEKMEKDGWMDKPGVTVLVGRWQDTLPGLLSQGVYFDGMYYDTFSENYSDLVDFFDHVVGLLAPTGVFSFFNGLGADRQVCYDVYKNVVEVDLQEYGLNVEYQVIKVNKDVTGADGHVWDGIKRRYWVVEDFYLPVCTF</sequence>
<reference key="1">
    <citation type="journal article" date="2004" name="Nature">
        <title>Genome evolution in yeasts.</title>
        <authorList>
            <person name="Dujon B."/>
            <person name="Sherman D."/>
            <person name="Fischer G."/>
            <person name="Durrens P."/>
            <person name="Casaregola S."/>
            <person name="Lafontaine I."/>
            <person name="de Montigny J."/>
            <person name="Marck C."/>
            <person name="Neuveglise C."/>
            <person name="Talla E."/>
            <person name="Goffard N."/>
            <person name="Frangeul L."/>
            <person name="Aigle M."/>
            <person name="Anthouard V."/>
            <person name="Babour A."/>
            <person name="Barbe V."/>
            <person name="Barnay S."/>
            <person name="Blanchin S."/>
            <person name="Beckerich J.-M."/>
            <person name="Beyne E."/>
            <person name="Bleykasten C."/>
            <person name="Boisrame A."/>
            <person name="Boyer J."/>
            <person name="Cattolico L."/>
            <person name="Confanioleri F."/>
            <person name="de Daruvar A."/>
            <person name="Despons L."/>
            <person name="Fabre E."/>
            <person name="Fairhead C."/>
            <person name="Ferry-Dumazet H."/>
            <person name="Groppi A."/>
            <person name="Hantraye F."/>
            <person name="Hennequin C."/>
            <person name="Jauniaux N."/>
            <person name="Joyet P."/>
            <person name="Kachouri R."/>
            <person name="Kerrest A."/>
            <person name="Koszul R."/>
            <person name="Lemaire M."/>
            <person name="Lesur I."/>
            <person name="Ma L."/>
            <person name="Muller H."/>
            <person name="Nicaud J.-M."/>
            <person name="Nikolski M."/>
            <person name="Oztas S."/>
            <person name="Ozier-Kalogeropoulos O."/>
            <person name="Pellenz S."/>
            <person name="Potier S."/>
            <person name="Richard G.-F."/>
            <person name="Straub M.-L."/>
            <person name="Suleau A."/>
            <person name="Swennen D."/>
            <person name="Tekaia F."/>
            <person name="Wesolowski-Louvel M."/>
            <person name="Westhof E."/>
            <person name="Wirth B."/>
            <person name="Zeniou-Meyer M."/>
            <person name="Zivanovic Y."/>
            <person name="Bolotin-Fukuhara M."/>
            <person name="Thierry A."/>
            <person name="Bouchier C."/>
            <person name="Caudron B."/>
            <person name="Scarpelli C."/>
            <person name="Gaillardin C."/>
            <person name="Weissenbach J."/>
            <person name="Wincker P."/>
            <person name="Souciet J.-L."/>
        </authorList>
    </citation>
    <scope>NUCLEOTIDE SEQUENCE [LARGE SCALE GENOMIC DNA]</scope>
    <source>
        <strain>CLIB 122 / E 150</strain>
    </source>
</reference>
<dbReference type="EC" id="2.1.1.-" evidence="1"/>
<dbReference type="EMBL" id="CR382129">
    <property type="protein sequence ID" value="CAG82151.1"/>
    <property type="molecule type" value="Genomic_DNA"/>
</dbReference>
<dbReference type="RefSeq" id="XP_501840.1">
    <property type="nucleotide sequence ID" value="XM_501840.1"/>
</dbReference>
<dbReference type="SMR" id="Q6CBX2"/>
<dbReference type="FunCoup" id="Q6CBX2">
    <property type="interactions" value="411"/>
</dbReference>
<dbReference type="STRING" id="284591.Q6CBX2"/>
<dbReference type="EnsemblFungi" id="CAG82151">
    <property type="protein sequence ID" value="CAG82151"/>
    <property type="gene ID" value="YALI0_C14718g"/>
</dbReference>
<dbReference type="KEGG" id="yli:2909738"/>
<dbReference type="VEuPathDB" id="FungiDB:YALI0_C14718g"/>
<dbReference type="HOGENOM" id="CLU_033831_0_0_1"/>
<dbReference type="InParanoid" id="Q6CBX2"/>
<dbReference type="OMA" id="YWVVDNY"/>
<dbReference type="OrthoDB" id="123546at4891"/>
<dbReference type="Proteomes" id="UP000001300">
    <property type="component" value="Chromosome C"/>
</dbReference>
<dbReference type="GO" id="GO:0005737">
    <property type="term" value="C:cytoplasm"/>
    <property type="evidence" value="ECO:0000318"/>
    <property type="project" value="GO_Central"/>
</dbReference>
<dbReference type="GO" id="GO:0005634">
    <property type="term" value="C:nucleus"/>
    <property type="evidence" value="ECO:0000318"/>
    <property type="project" value="GO_Central"/>
</dbReference>
<dbReference type="GO" id="GO:0019702">
    <property type="term" value="F:protein arginine N5-methyltransferase activity"/>
    <property type="evidence" value="ECO:0000318"/>
    <property type="project" value="GO_Central"/>
</dbReference>
<dbReference type="GO" id="GO:0032259">
    <property type="term" value="P:methylation"/>
    <property type="evidence" value="ECO:0007669"/>
    <property type="project" value="UniProtKB-KW"/>
</dbReference>
<dbReference type="CDD" id="cd02440">
    <property type="entry name" value="AdoMet_MTases"/>
    <property type="match status" value="1"/>
</dbReference>
<dbReference type="FunFam" id="3.40.50.150:FF:000310">
    <property type="entry name" value="Arginine N-methyltransferase 2"/>
    <property type="match status" value="1"/>
</dbReference>
<dbReference type="Gene3D" id="3.40.50.150">
    <property type="entry name" value="Vaccinia Virus protein VP39"/>
    <property type="match status" value="1"/>
</dbReference>
<dbReference type="InterPro" id="IPR017408">
    <property type="entry name" value="Arginine_N-MeTrfase_2"/>
</dbReference>
<dbReference type="InterPro" id="IPR051038">
    <property type="entry name" value="RMT2/GAMT_Mtase"/>
</dbReference>
<dbReference type="InterPro" id="IPR026480">
    <property type="entry name" value="RMT2_dom"/>
</dbReference>
<dbReference type="InterPro" id="IPR029063">
    <property type="entry name" value="SAM-dependent_MTases_sf"/>
</dbReference>
<dbReference type="PANTHER" id="PTHR32379">
    <property type="entry name" value="GUANIDINOACETATE N-METHYLTRANSFERASE"/>
    <property type="match status" value="1"/>
</dbReference>
<dbReference type="PANTHER" id="PTHR32379:SF1">
    <property type="entry name" value="GUANIDINOACETATE N-METHYLTRANSFERASE"/>
    <property type="match status" value="1"/>
</dbReference>
<dbReference type="PIRSF" id="PIRSF038148">
    <property type="entry name" value="Arginine_N-mtfrase-2"/>
    <property type="match status" value="1"/>
</dbReference>
<dbReference type="SUPFAM" id="SSF53335">
    <property type="entry name" value="S-adenosyl-L-methionine-dependent methyltransferases"/>
    <property type="match status" value="1"/>
</dbReference>
<dbReference type="PROSITE" id="PS51559">
    <property type="entry name" value="SAM_RMT2"/>
    <property type="match status" value="1"/>
</dbReference>
<comment type="function">
    <text evidence="1">S-adenosyl-L-methionine-dependent protein-arginine N-methyltransferase that methylates the delta-nitrogen atom of arginine residues to form N5-methylarginine (type IV) in target proteins. Monomethylates ribosomal protein L12.</text>
</comment>
<comment type="subunit">
    <text evidence="1">Monomer.</text>
</comment>
<comment type="subcellular location">
    <subcellularLocation>
        <location evidence="1">Cytoplasm</location>
    </subcellularLocation>
    <subcellularLocation>
        <location evidence="1">Nucleus</location>
    </subcellularLocation>
</comment>
<comment type="similarity">
    <text evidence="2">Belongs to the class I-like SAM-binding methyltransferase superfamily. RMT2 methyltransferase family.</text>
</comment>
<gene>
    <name evidence="1" type="primary">RMT2</name>
    <name type="ordered locus">YALI0C14718g</name>
</gene>
<protein>
    <recommendedName>
        <fullName evidence="1">Protein arginine N-methyltransferase 2</fullName>
        <ecNumber evidence="1">2.1.1.-</ecNumber>
    </recommendedName>
    <alternativeName>
        <fullName evidence="1">Protein-arginine N5-methyltransferase</fullName>
    </alternativeName>
    <alternativeName>
        <fullName evidence="1">Type IV protein arginine N-methyltransferase</fullName>
        <shortName evidence="1">Type IV PRMT</shortName>
    </alternativeName>
</protein>
<keyword id="KW-0963">Cytoplasm</keyword>
<keyword id="KW-0489">Methyltransferase</keyword>
<keyword id="KW-0539">Nucleus</keyword>
<keyword id="KW-1185">Reference proteome</keyword>
<keyword id="KW-0949">S-adenosyl-L-methionine</keyword>
<keyword id="KW-0808">Transferase</keyword>
<accession>Q6CBX2</accession>
<feature type="chain" id="PRO_0000228979" description="Protein arginine N-methyltransferase 2">
    <location>
        <begin position="1"/>
        <end position="475"/>
    </location>
</feature>
<feature type="domain" description="RMT2" evidence="2">
    <location>
        <begin position="247"/>
        <end position="475"/>
    </location>
</feature>
<feature type="region of interest" description="Disordered" evidence="3">
    <location>
        <begin position="167"/>
        <end position="194"/>
    </location>
</feature>
<feature type="compositionally biased region" description="Acidic residues" evidence="3">
    <location>
        <begin position="169"/>
        <end position="194"/>
    </location>
</feature>
<feature type="binding site" evidence="2">
    <location>
        <position position="254"/>
    </location>
    <ligand>
        <name>S-adenosyl-L-methionine</name>
        <dbReference type="ChEBI" id="CHEBI:59789"/>
    </ligand>
</feature>
<feature type="binding site" evidence="2">
    <location>
        <position position="285"/>
    </location>
    <ligand>
        <name>S-adenosyl-L-methionine</name>
        <dbReference type="ChEBI" id="CHEBI:59789"/>
    </ligand>
</feature>
<feature type="binding site" evidence="2">
    <location>
        <begin position="310"/>
        <end position="315"/>
    </location>
    <ligand>
        <name>S-adenosyl-L-methionine</name>
        <dbReference type="ChEBI" id="CHEBI:59789"/>
    </ligand>
</feature>
<feature type="binding site" evidence="2">
    <location>
        <begin position="331"/>
        <end position="333"/>
    </location>
    <ligand>
        <name>S-adenosyl-L-methionine</name>
        <dbReference type="ChEBI" id="CHEBI:59789"/>
    </ligand>
</feature>
<feature type="binding site" evidence="2">
    <location>
        <begin position="358"/>
        <end position="359"/>
    </location>
    <ligand>
        <name>S-adenosyl-L-methionine</name>
        <dbReference type="ChEBI" id="CHEBI:59789"/>
    </ligand>
</feature>
<feature type="binding site" evidence="2">
    <location>
        <position position="378"/>
    </location>
    <ligand>
        <name>S-adenosyl-L-methionine</name>
        <dbReference type="ChEBI" id="CHEBI:59789"/>
    </ligand>
</feature>
<proteinExistence type="inferred from homology"/>
<organism>
    <name type="scientific">Yarrowia lipolytica (strain CLIB 122 / E 150)</name>
    <name type="common">Yeast</name>
    <name type="synonym">Candida lipolytica</name>
    <dbReference type="NCBI Taxonomy" id="284591"/>
    <lineage>
        <taxon>Eukaryota</taxon>
        <taxon>Fungi</taxon>
        <taxon>Dikarya</taxon>
        <taxon>Ascomycota</taxon>
        <taxon>Saccharomycotina</taxon>
        <taxon>Dipodascomycetes</taxon>
        <taxon>Dipodascales</taxon>
        <taxon>Dipodascales incertae sedis</taxon>
        <taxon>Yarrowia</taxon>
    </lineage>
</organism>
<name>RMT2_YARLI</name>
<evidence type="ECO:0000250" key="1">
    <source>
        <dbReference type="UniProtKB" id="Q03305"/>
    </source>
</evidence>
<evidence type="ECO:0000255" key="2">
    <source>
        <dbReference type="PROSITE-ProRule" id="PRU00892"/>
    </source>
</evidence>
<evidence type="ECO:0000256" key="3">
    <source>
        <dbReference type="SAM" id="MobiDB-lite"/>
    </source>
</evidence>